<organismHost>
    <name type="scientific">Crataegus</name>
    <name type="common">hawthorn</name>
    <dbReference type="NCBI Taxonomy" id="23159"/>
</organismHost>
<organismHost>
    <name type="scientific">Malus sieboldii</name>
    <dbReference type="NCBI Taxonomy" id="106566"/>
</organismHost>
<organismHost>
    <name type="scientific">Malus sylvestris</name>
    <name type="common">European crab apple</name>
    <dbReference type="NCBI Taxonomy" id="3752"/>
</organismHost>
<organismHost>
    <name type="scientific">Pyrus communis</name>
    <name type="common">Pear</name>
    <name type="synonym">Pyrus domestica</name>
    <dbReference type="NCBI Taxonomy" id="23211"/>
</organismHost>
<dbReference type="EMBL" id="D21829">
    <property type="protein sequence ID" value="BAA04857.1"/>
    <property type="molecule type" value="Genomic_RNA"/>
</dbReference>
<dbReference type="RefSeq" id="NP_604468.1">
    <property type="nucleotide sequence ID" value="NC_003462.2"/>
</dbReference>
<dbReference type="SMR" id="Q64966"/>
<dbReference type="KEGG" id="vg:935269"/>
<dbReference type="Proteomes" id="UP000000678">
    <property type="component" value="Segment"/>
</dbReference>
<dbReference type="GO" id="GO:0019029">
    <property type="term" value="C:helical viral capsid"/>
    <property type="evidence" value="ECO:0007669"/>
    <property type="project" value="UniProtKB-KW"/>
</dbReference>
<dbReference type="GO" id="GO:0005198">
    <property type="term" value="F:structural molecule activity"/>
    <property type="evidence" value="ECO:0007669"/>
    <property type="project" value="InterPro"/>
</dbReference>
<dbReference type="InterPro" id="IPR000052">
    <property type="entry name" value="Pltvir_coat"/>
</dbReference>
<dbReference type="Pfam" id="PF00286">
    <property type="entry name" value="Flexi_CP"/>
    <property type="match status" value="1"/>
</dbReference>
<dbReference type="PRINTS" id="PR00232">
    <property type="entry name" value="POTXCARLCOAT"/>
</dbReference>
<dbReference type="PROSITE" id="PS00418">
    <property type="entry name" value="POTEX_CARLAVIRUS_COAT"/>
    <property type="match status" value="1"/>
</dbReference>
<comment type="subcellular location">
    <subcellularLocation>
        <location evidence="2">Virion</location>
    </subcellularLocation>
</comment>
<name>CAPSD_ASPVP</name>
<sequence length="414" mass="43712">MTSNGSQPQASTPMVSAEEPAAAASVPNSTPMVSAEGPAAAVSAPNSSVVSSAPASAPTASEPVISQVQSLAPIVSGFDPNLHGRLTNEQMRQAQNEAAMQGYEEGSRRNPRLPSSTTAHNDYASMNSNPFETGTAYGGAPRVSFGSYPTFPGSGSASEPNSQRIFPQQHGVNPPAHASDLVPHQATSGGNTGTPFTLGNRAPRNATANTGGMRRRLDSVGLKNIRYEPQAGVVASNQKIRAVGVALIGMGIPEHQLTEVGVYLARHCADVGASDKSALLGTFPGSDITLEEVGTMIKQTEGCTLRQYCAFYAKHVWNLMLQTQSPPANWVGKEFKFETRYAAFDFFFGVESTASLEPADGLIRLPTQAERVANATSKEIQMYRIRSMEGTQAVNFGEVTGGKIGPKPVLSIRK</sequence>
<protein>
    <recommendedName>
        <fullName>Capsid protein</fullName>
        <shortName>CP</shortName>
    </recommendedName>
    <alternativeName>
        <fullName>Coat protein</fullName>
    </alternativeName>
</protein>
<gene>
    <name type="ORF">ORF5</name>
</gene>
<proteinExistence type="predicted"/>
<evidence type="ECO:0000256" key="1">
    <source>
        <dbReference type="SAM" id="MobiDB-lite"/>
    </source>
</evidence>
<evidence type="ECO:0000305" key="2"/>
<reference key="1">
    <citation type="journal article" date="1994" name="J. Gen. Virol.">
        <title>Nucleotide sequences of apple stem pitting virus and of the coat protein gene of a similar virus from pear associated with vein yellows disease and their relationship with potex- and carlaviruses.</title>
        <authorList>
            <person name="Jelkmann W."/>
        </authorList>
    </citation>
    <scope>NUCLEOTIDE SEQUENCE [GENOMIC RNA]</scope>
</reference>
<feature type="chain" id="PRO_0000401084" description="Capsid protein">
    <location>
        <begin position="1"/>
        <end position="414"/>
    </location>
</feature>
<feature type="region of interest" description="Disordered" evidence="1">
    <location>
        <begin position="1"/>
        <end position="60"/>
    </location>
</feature>
<feature type="region of interest" description="Disordered" evidence="1">
    <location>
        <begin position="94"/>
        <end position="127"/>
    </location>
</feature>
<feature type="region of interest" description="Disordered" evidence="1">
    <location>
        <begin position="148"/>
        <end position="212"/>
    </location>
</feature>
<feature type="compositionally biased region" description="Polar residues" evidence="1">
    <location>
        <begin position="1"/>
        <end position="14"/>
    </location>
</feature>
<feature type="compositionally biased region" description="Low complexity" evidence="1">
    <location>
        <begin position="15"/>
        <end position="27"/>
    </location>
</feature>
<feature type="compositionally biased region" description="Low complexity" evidence="1">
    <location>
        <begin position="38"/>
        <end position="60"/>
    </location>
</feature>
<feature type="compositionally biased region" description="Polar residues" evidence="1">
    <location>
        <begin position="113"/>
        <end position="127"/>
    </location>
</feature>
<feature type="compositionally biased region" description="Polar residues" evidence="1">
    <location>
        <begin position="153"/>
        <end position="166"/>
    </location>
</feature>
<feature type="compositionally biased region" description="Polar residues" evidence="1">
    <location>
        <begin position="185"/>
        <end position="197"/>
    </location>
</feature>
<organism>
    <name type="scientific">Apple stem pitting virus (isolate PA66)</name>
    <name type="common">ASPV</name>
    <dbReference type="NCBI Taxonomy" id="651356"/>
    <lineage>
        <taxon>Viruses</taxon>
        <taxon>Riboviria</taxon>
        <taxon>Orthornavirae</taxon>
        <taxon>Kitrinoviricota</taxon>
        <taxon>Alsuviricetes</taxon>
        <taxon>Tymovirales</taxon>
        <taxon>Betaflexiviridae</taxon>
        <taxon>Quinvirinae</taxon>
        <taxon>Foveavirus</taxon>
        <taxon>Foveavirus mali</taxon>
    </lineage>
</organism>
<keyword id="KW-0167">Capsid protein</keyword>
<keyword id="KW-1139">Helical capsid protein</keyword>
<keyword id="KW-1185">Reference proteome</keyword>
<keyword id="KW-0946">Virion</keyword>
<accession>Q64966</accession>